<keyword id="KW-0413">Isomerase</keyword>
<keyword id="KW-0819">tRNA processing</keyword>
<gene>
    <name evidence="1" type="primary">truD</name>
    <name type="ordered locus">TV1406</name>
    <name type="ORF">TVG1453468</name>
</gene>
<accession>Q978K9</accession>
<reference key="1">
    <citation type="journal article" date="2000" name="Proc. Natl. Acad. Sci. U.S.A.">
        <title>Archaeal adaptation to higher temperatures revealed by genomic sequence of Thermoplasma volcanium.</title>
        <authorList>
            <person name="Kawashima T."/>
            <person name="Amano N."/>
            <person name="Koike H."/>
            <person name="Makino S."/>
            <person name="Higuchi S."/>
            <person name="Kawashima-Ohya Y."/>
            <person name="Watanabe K."/>
            <person name="Yamazaki M."/>
            <person name="Kanehori K."/>
            <person name="Kawamoto T."/>
            <person name="Nunoshiba T."/>
            <person name="Yamamoto Y."/>
            <person name="Aramaki H."/>
            <person name="Makino K."/>
            <person name="Suzuki M."/>
        </authorList>
    </citation>
    <scope>NUCLEOTIDE SEQUENCE [LARGE SCALE GENOMIC DNA]</scope>
    <source>
        <strain>ATCC 51530 / DSM 4299 / JCM 9571 / NBRC 15438 / GSS1</strain>
    </source>
</reference>
<proteinExistence type="inferred from homology"/>
<comment type="function">
    <text evidence="1">Could be responsible for synthesis of pseudouridine from uracil-13 in transfer RNAs.</text>
</comment>
<comment type="catalytic activity">
    <reaction evidence="1">
        <text>uridine(13) in tRNA = pseudouridine(13) in tRNA</text>
        <dbReference type="Rhea" id="RHEA:42540"/>
        <dbReference type="Rhea" id="RHEA-COMP:10105"/>
        <dbReference type="Rhea" id="RHEA-COMP:10106"/>
        <dbReference type="ChEBI" id="CHEBI:65314"/>
        <dbReference type="ChEBI" id="CHEBI:65315"/>
        <dbReference type="EC" id="5.4.99.27"/>
    </reaction>
</comment>
<comment type="similarity">
    <text evidence="1">Belongs to the pseudouridine synthase TruD family.</text>
</comment>
<name>TRUD_THEVO</name>
<feature type="chain" id="PRO_0000152557" description="Probable tRNA pseudouridine synthase D">
    <location>
        <begin position="1"/>
        <end position="409"/>
    </location>
</feature>
<feature type="domain" description="TRUD" evidence="1">
    <location>
        <begin position="146"/>
        <end position="365"/>
    </location>
</feature>
<feature type="active site" description="Nucleophile" evidence="1">
    <location>
        <position position="73"/>
    </location>
</feature>
<evidence type="ECO:0000255" key="1">
    <source>
        <dbReference type="HAMAP-Rule" id="MF_01082"/>
    </source>
</evidence>
<organism>
    <name type="scientific">Thermoplasma volcanium (strain ATCC 51530 / DSM 4299 / JCM 9571 / NBRC 15438 / GSS1)</name>
    <dbReference type="NCBI Taxonomy" id="273116"/>
    <lineage>
        <taxon>Archaea</taxon>
        <taxon>Methanobacteriati</taxon>
        <taxon>Thermoplasmatota</taxon>
        <taxon>Thermoplasmata</taxon>
        <taxon>Thermoplasmatales</taxon>
        <taxon>Thermoplasmataceae</taxon>
        <taxon>Thermoplasma</taxon>
    </lineage>
</organism>
<protein>
    <recommendedName>
        <fullName evidence="1">Probable tRNA pseudouridine synthase D</fullName>
        <ecNumber evidence="1">5.4.99.27</ecNumber>
    </recommendedName>
    <alternativeName>
        <fullName evidence="1">tRNA pseudouridine(13) synthase</fullName>
    </alternativeName>
    <alternativeName>
        <fullName evidence="1">tRNA pseudouridylate synthase D</fullName>
    </alternativeName>
    <alternativeName>
        <fullName evidence="1">tRNA-uridine isomerase D</fullName>
    </alternativeName>
</protein>
<sequence>MNKPENFEEAIEIKRDPEDFSVEEIADIEPDPNGKYTIIKARVRDWDTNRIAAEIARRLHMSRKRVTFAGTKDKRAVKLQYFCINSADVDVASLSGIKDFEVIESFKSSHYLTLGDLIANHFKIRFYGIDPEMFRERYVHIISKGGFPNFFGDQRFGSRRRNTHEIGKLIIKGEYEEAVKKYIYDEKYDKESYRKHFIDTLDYKTALERFPHSLSFERSLIGYYARNGTFKGAFDSLPKNLTIMFVHAYQSYLFNRILDERLKIYGLNAVLPGDIAFPVDAYFNPDKSKPIEVNSYNREKISKLVSSDKIRISLPIFGYKTWIDNSDFGDVEYGILKEEGISQDDFKNKDFAYLSSSGDRRIISAKPINFSLENNVVEFTLGKGIYATVFLSSIGRLKENVYSDSEAEL</sequence>
<dbReference type="EC" id="5.4.99.27" evidence="1"/>
<dbReference type="EMBL" id="BA000011">
    <property type="protein sequence ID" value="BAB60548.1"/>
    <property type="molecule type" value="Genomic_DNA"/>
</dbReference>
<dbReference type="RefSeq" id="WP_010917638.1">
    <property type="nucleotide sequence ID" value="NC_002689.2"/>
</dbReference>
<dbReference type="SMR" id="Q978K9"/>
<dbReference type="STRING" id="273116.gene:9382215"/>
<dbReference type="PaxDb" id="273116-14325645"/>
<dbReference type="GeneID" id="1442096"/>
<dbReference type="KEGG" id="tvo:TVG1453468"/>
<dbReference type="eggNOG" id="arCOG04252">
    <property type="taxonomic scope" value="Archaea"/>
</dbReference>
<dbReference type="HOGENOM" id="CLU_005281_4_1_2"/>
<dbReference type="OrthoDB" id="1798at2157"/>
<dbReference type="PhylomeDB" id="Q978K9"/>
<dbReference type="Proteomes" id="UP000001017">
    <property type="component" value="Chromosome"/>
</dbReference>
<dbReference type="GO" id="GO:0003723">
    <property type="term" value="F:RNA binding"/>
    <property type="evidence" value="ECO:0007669"/>
    <property type="project" value="InterPro"/>
</dbReference>
<dbReference type="GO" id="GO:0160150">
    <property type="term" value="F:tRNA pseudouridine(13) synthase activity"/>
    <property type="evidence" value="ECO:0007669"/>
    <property type="project" value="UniProtKB-EC"/>
</dbReference>
<dbReference type="GO" id="GO:0031119">
    <property type="term" value="P:tRNA pseudouridine synthesis"/>
    <property type="evidence" value="ECO:0007669"/>
    <property type="project" value="UniProtKB-UniRule"/>
</dbReference>
<dbReference type="Gene3D" id="1.10.1510.30">
    <property type="match status" value="1"/>
</dbReference>
<dbReference type="Gene3D" id="3.30.70.3160">
    <property type="match status" value="1"/>
</dbReference>
<dbReference type="Gene3D" id="3.30.2350.20">
    <property type="entry name" value="TruD, catalytic domain"/>
    <property type="match status" value="1"/>
</dbReference>
<dbReference type="HAMAP" id="MF_01082">
    <property type="entry name" value="TruD"/>
    <property type="match status" value="1"/>
</dbReference>
<dbReference type="InterPro" id="IPR020103">
    <property type="entry name" value="PsdUridine_synth_cat_dom_sf"/>
</dbReference>
<dbReference type="InterPro" id="IPR001656">
    <property type="entry name" value="PsdUridine_synth_TruD"/>
</dbReference>
<dbReference type="InterPro" id="IPR020119">
    <property type="entry name" value="PsdUridine_synth_TruD_CS"/>
</dbReference>
<dbReference type="InterPro" id="IPR011760">
    <property type="entry name" value="PsdUridine_synth_TruD_insert"/>
</dbReference>
<dbReference type="InterPro" id="IPR042214">
    <property type="entry name" value="TruD_catalytic"/>
</dbReference>
<dbReference type="NCBIfam" id="TIGR00094">
    <property type="entry name" value="tRNA_TruD_broad"/>
    <property type="match status" value="1"/>
</dbReference>
<dbReference type="PANTHER" id="PTHR13326:SF21">
    <property type="entry name" value="PSEUDOURIDYLATE SYNTHASE PUS7L"/>
    <property type="match status" value="1"/>
</dbReference>
<dbReference type="PANTHER" id="PTHR13326">
    <property type="entry name" value="TRNA PSEUDOURIDINE SYNTHASE D"/>
    <property type="match status" value="1"/>
</dbReference>
<dbReference type="Pfam" id="PF01142">
    <property type="entry name" value="TruD"/>
    <property type="match status" value="1"/>
</dbReference>
<dbReference type="PIRSF" id="PIRSF037016">
    <property type="entry name" value="Pseudouridin_synth_euk_prd"/>
    <property type="match status" value="1"/>
</dbReference>
<dbReference type="SUPFAM" id="SSF55120">
    <property type="entry name" value="Pseudouridine synthase"/>
    <property type="match status" value="1"/>
</dbReference>
<dbReference type="PROSITE" id="PS50984">
    <property type="entry name" value="TRUD"/>
    <property type="match status" value="1"/>
</dbReference>
<dbReference type="PROSITE" id="PS01268">
    <property type="entry name" value="UPF0024"/>
    <property type="match status" value="1"/>
</dbReference>